<accession>Q9M1D3</accession>
<accession>F4JAL9</accession>
<evidence type="ECO:0000255" key="1"/>
<evidence type="ECO:0000255" key="2">
    <source>
        <dbReference type="PROSITE-ProRule" id="PRU10117"/>
    </source>
</evidence>
<evidence type="ECO:0000269" key="3">
    <source>
    </source>
</evidence>
<evidence type="ECO:0000305" key="4"/>
<feature type="transit peptide" description="Mitochondrion" evidence="1">
    <location>
        <begin position="1"/>
        <end position="25"/>
    </location>
</feature>
<feature type="chain" id="PRO_0000005485" description="Citrate synthase 5, mitochondrial">
    <location>
        <begin position="26"/>
        <end position="464"/>
    </location>
</feature>
<feature type="active site" evidence="2">
    <location>
        <position position="300"/>
    </location>
</feature>
<feature type="active site" evidence="2">
    <location>
        <position position="346"/>
    </location>
</feature>
<feature type="active site" evidence="2">
    <location>
        <position position="401"/>
    </location>
</feature>
<proteinExistence type="evidence at protein level"/>
<protein>
    <recommendedName>
        <fullName>Citrate synthase 5, mitochondrial</fullName>
        <ecNumber>2.3.3.16</ecNumber>
    </recommendedName>
</protein>
<comment type="catalytic activity">
    <reaction evidence="2">
        <text>oxaloacetate + acetyl-CoA + H2O = citrate + CoA + H(+)</text>
        <dbReference type="Rhea" id="RHEA:16845"/>
        <dbReference type="ChEBI" id="CHEBI:15377"/>
        <dbReference type="ChEBI" id="CHEBI:15378"/>
        <dbReference type="ChEBI" id="CHEBI:16452"/>
        <dbReference type="ChEBI" id="CHEBI:16947"/>
        <dbReference type="ChEBI" id="CHEBI:57287"/>
        <dbReference type="ChEBI" id="CHEBI:57288"/>
        <dbReference type="EC" id="2.3.3.16"/>
    </reaction>
</comment>
<comment type="pathway">
    <text>Carbohydrate metabolism; tricarboxylic acid cycle; isocitrate from oxaloacetate: step 1/2.</text>
</comment>
<comment type="subcellular location">
    <subcellularLocation>
        <location evidence="3">Mitochondrion matrix</location>
    </subcellularLocation>
</comment>
<comment type="miscellaneous">
    <text>Citrate synthase is found in nearly all cells capable of oxidative metabolism.</text>
</comment>
<comment type="similarity">
    <text evidence="4">Belongs to the citrate synthase family.</text>
</comment>
<comment type="sequence caution" evidence="4">
    <conflict type="erroneous gene model prediction">
        <sequence resource="EMBL-CDS" id="CAB75925"/>
    </conflict>
</comment>
<gene>
    <name type="primary">CSY5</name>
    <name type="ordered locus">At3g60100</name>
    <name type="ORF">T2O9.80</name>
</gene>
<organism>
    <name type="scientific">Arabidopsis thaliana</name>
    <name type="common">Mouse-ear cress</name>
    <dbReference type="NCBI Taxonomy" id="3702"/>
    <lineage>
        <taxon>Eukaryota</taxon>
        <taxon>Viridiplantae</taxon>
        <taxon>Streptophyta</taxon>
        <taxon>Embryophyta</taxon>
        <taxon>Tracheophyta</taxon>
        <taxon>Spermatophyta</taxon>
        <taxon>Magnoliopsida</taxon>
        <taxon>eudicotyledons</taxon>
        <taxon>Gunneridae</taxon>
        <taxon>Pentapetalae</taxon>
        <taxon>rosids</taxon>
        <taxon>malvids</taxon>
        <taxon>Brassicales</taxon>
        <taxon>Brassicaceae</taxon>
        <taxon>Camelineae</taxon>
        <taxon>Arabidopsis</taxon>
    </lineage>
</organism>
<dbReference type="EC" id="2.3.3.16"/>
<dbReference type="EMBL" id="AL138658">
    <property type="protein sequence ID" value="CAB75925.1"/>
    <property type="status" value="ALT_SEQ"/>
    <property type="molecule type" value="Genomic_DNA"/>
</dbReference>
<dbReference type="EMBL" id="CP002686">
    <property type="protein sequence ID" value="AEE80011.1"/>
    <property type="molecule type" value="Genomic_DNA"/>
</dbReference>
<dbReference type="PIR" id="T47834">
    <property type="entry name" value="T47834"/>
</dbReference>
<dbReference type="RefSeq" id="NP_191569.2">
    <property type="nucleotide sequence ID" value="NM_115873.3"/>
</dbReference>
<dbReference type="SMR" id="Q9M1D3"/>
<dbReference type="BioGRID" id="10494">
    <property type="interactions" value="19"/>
</dbReference>
<dbReference type="FunCoup" id="Q9M1D3">
    <property type="interactions" value="2642"/>
</dbReference>
<dbReference type="STRING" id="3702.Q9M1D3"/>
<dbReference type="PaxDb" id="3702-AT3G60100.1"/>
<dbReference type="ProteomicsDB" id="246802"/>
<dbReference type="EnsemblPlants" id="AT3G60100.1">
    <property type="protein sequence ID" value="AT3G60100.1"/>
    <property type="gene ID" value="AT3G60100"/>
</dbReference>
<dbReference type="GeneID" id="825180"/>
<dbReference type="Gramene" id="AT3G60100.1">
    <property type="protein sequence ID" value="AT3G60100.1"/>
    <property type="gene ID" value="AT3G60100"/>
</dbReference>
<dbReference type="KEGG" id="ath:AT3G60100"/>
<dbReference type="Araport" id="AT3G60100"/>
<dbReference type="TAIR" id="AT3G60100">
    <property type="gene designation" value="CSY5"/>
</dbReference>
<dbReference type="eggNOG" id="KOG2617">
    <property type="taxonomic scope" value="Eukaryota"/>
</dbReference>
<dbReference type="HOGENOM" id="CLU_022049_2_1_1"/>
<dbReference type="InParanoid" id="Q9M1D3"/>
<dbReference type="UniPathway" id="UPA00223">
    <property type="reaction ID" value="UER00717"/>
</dbReference>
<dbReference type="PRO" id="PR:Q9M1D3"/>
<dbReference type="Proteomes" id="UP000006548">
    <property type="component" value="Chromosome 3"/>
</dbReference>
<dbReference type="ExpressionAtlas" id="Q9M1D3">
    <property type="expression patterns" value="baseline and differential"/>
</dbReference>
<dbReference type="GO" id="GO:0005829">
    <property type="term" value="C:cytosol"/>
    <property type="evidence" value="ECO:0007005"/>
    <property type="project" value="TAIR"/>
</dbReference>
<dbReference type="GO" id="GO:0005759">
    <property type="term" value="C:mitochondrial matrix"/>
    <property type="evidence" value="ECO:0007669"/>
    <property type="project" value="UniProtKB-SubCell"/>
</dbReference>
<dbReference type="GO" id="GO:0005739">
    <property type="term" value="C:mitochondrion"/>
    <property type="evidence" value="ECO:0007005"/>
    <property type="project" value="TAIR"/>
</dbReference>
<dbReference type="GO" id="GO:0004108">
    <property type="term" value="F:citrate (Si)-synthase activity"/>
    <property type="evidence" value="ECO:0007669"/>
    <property type="project" value="InterPro"/>
</dbReference>
<dbReference type="GO" id="GO:0006101">
    <property type="term" value="P:citrate metabolic process"/>
    <property type="evidence" value="ECO:0007669"/>
    <property type="project" value="InterPro"/>
</dbReference>
<dbReference type="GO" id="GO:0006099">
    <property type="term" value="P:tricarboxylic acid cycle"/>
    <property type="evidence" value="ECO:0007669"/>
    <property type="project" value="UniProtKB-UniPathway"/>
</dbReference>
<dbReference type="FunFam" id="1.10.230.10:FF:000001">
    <property type="entry name" value="Citrate synthase"/>
    <property type="match status" value="1"/>
</dbReference>
<dbReference type="FunFam" id="1.10.580.10:FF:000001">
    <property type="entry name" value="Citrate synthase"/>
    <property type="match status" value="1"/>
</dbReference>
<dbReference type="Gene3D" id="1.10.580.10">
    <property type="entry name" value="Citrate Synthase, domain 1"/>
    <property type="match status" value="1"/>
</dbReference>
<dbReference type="Gene3D" id="1.10.230.10">
    <property type="entry name" value="Cytochrome P450-Terp, domain 2"/>
    <property type="match status" value="1"/>
</dbReference>
<dbReference type="InterPro" id="IPR016142">
    <property type="entry name" value="Citrate_synth-like_lrg_a-sub"/>
</dbReference>
<dbReference type="InterPro" id="IPR016143">
    <property type="entry name" value="Citrate_synth-like_sm_a-sub"/>
</dbReference>
<dbReference type="InterPro" id="IPR002020">
    <property type="entry name" value="Citrate_synthase"/>
</dbReference>
<dbReference type="InterPro" id="IPR019810">
    <property type="entry name" value="Citrate_synthase_AS"/>
</dbReference>
<dbReference type="InterPro" id="IPR010109">
    <property type="entry name" value="Citrate_synthase_euk"/>
</dbReference>
<dbReference type="InterPro" id="IPR036969">
    <property type="entry name" value="Citrate_synthase_sf"/>
</dbReference>
<dbReference type="NCBIfam" id="TIGR01793">
    <property type="entry name" value="cit_synth_euk"/>
    <property type="match status" value="1"/>
</dbReference>
<dbReference type="NCBIfam" id="NF007128">
    <property type="entry name" value="PRK09569.1"/>
    <property type="match status" value="1"/>
</dbReference>
<dbReference type="PANTHER" id="PTHR11739">
    <property type="entry name" value="CITRATE SYNTHASE"/>
    <property type="match status" value="1"/>
</dbReference>
<dbReference type="PANTHER" id="PTHR11739:SF8">
    <property type="entry name" value="CITRATE SYNTHASE, MITOCHONDRIAL"/>
    <property type="match status" value="1"/>
</dbReference>
<dbReference type="Pfam" id="PF00285">
    <property type="entry name" value="Citrate_synt"/>
    <property type="match status" value="1"/>
</dbReference>
<dbReference type="PRINTS" id="PR00143">
    <property type="entry name" value="CITRTSNTHASE"/>
</dbReference>
<dbReference type="SUPFAM" id="SSF48256">
    <property type="entry name" value="Citrate synthase"/>
    <property type="match status" value="1"/>
</dbReference>
<dbReference type="PROSITE" id="PS00480">
    <property type="entry name" value="CITRATE_SYNTHASE"/>
    <property type="match status" value="1"/>
</dbReference>
<reference key="1">
    <citation type="journal article" date="2000" name="Nature">
        <title>Sequence and analysis of chromosome 3 of the plant Arabidopsis thaliana.</title>
        <authorList>
            <person name="Salanoubat M."/>
            <person name="Lemcke K."/>
            <person name="Rieger M."/>
            <person name="Ansorge W."/>
            <person name="Unseld M."/>
            <person name="Fartmann B."/>
            <person name="Valle G."/>
            <person name="Bloecker H."/>
            <person name="Perez-Alonso M."/>
            <person name="Obermaier B."/>
            <person name="Delseny M."/>
            <person name="Boutry M."/>
            <person name="Grivell L.A."/>
            <person name="Mache R."/>
            <person name="Puigdomenech P."/>
            <person name="De Simone V."/>
            <person name="Choisne N."/>
            <person name="Artiguenave F."/>
            <person name="Robert C."/>
            <person name="Brottier P."/>
            <person name="Wincker P."/>
            <person name="Cattolico L."/>
            <person name="Weissenbach J."/>
            <person name="Saurin W."/>
            <person name="Quetier F."/>
            <person name="Schaefer M."/>
            <person name="Mueller-Auer S."/>
            <person name="Gabel C."/>
            <person name="Fuchs M."/>
            <person name="Benes V."/>
            <person name="Wurmbach E."/>
            <person name="Drzonek H."/>
            <person name="Erfle H."/>
            <person name="Jordan N."/>
            <person name="Bangert S."/>
            <person name="Wiedelmann R."/>
            <person name="Kranz H."/>
            <person name="Voss H."/>
            <person name="Holland R."/>
            <person name="Brandt P."/>
            <person name="Nyakatura G."/>
            <person name="Vezzi A."/>
            <person name="D'Angelo M."/>
            <person name="Pallavicini A."/>
            <person name="Toppo S."/>
            <person name="Simionati B."/>
            <person name="Conrad A."/>
            <person name="Hornischer K."/>
            <person name="Kauer G."/>
            <person name="Loehnert T.-H."/>
            <person name="Nordsiek G."/>
            <person name="Reichelt J."/>
            <person name="Scharfe M."/>
            <person name="Schoen O."/>
            <person name="Bargues M."/>
            <person name="Terol J."/>
            <person name="Climent J."/>
            <person name="Navarro P."/>
            <person name="Collado C."/>
            <person name="Perez-Perez A."/>
            <person name="Ottenwaelder B."/>
            <person name="Duchemin D."/>
            <person name="Cooke R."/>
            <person name="Laudie M."/>
            <person name="Berger-Llauro C."/>
            <person name="Purnelle B."/>
            <person name="Masuy D."/>
            <person name="de Haan M."/>
            <person name="Maarse A.C."/>
            <person name="Alcaraz J.-P."/>
            <person name="Cottet A."/>
            <person name="Casacuberta E."/>
            <person name="Monfort A."/>
            <person name="Argiriou A."/>
            <person name="Flores M."/>
            <person name="Liguori R."/>
            <person name="Vitale D."/>
            <person name="Mannhaupt G."/>
            <person name="Haase D."/>
            <person name="Schoof H."/>
            <person name="Rudd S."/>
            <person name="Zaccaria P."/>
            <person name="Mewes H.-W."/>
            <person name="Mayer K.F.X."/>
            <person name="Kaul S."/>
            <person name="Town C.D."/>
            <person name="Koo H.L."/>
            <person name="Tallon L.J."/>
            <person name="Jenkins J."/>
            <person name="Rooney T."/>
            <person name="Rizzo M."/>
            <person name="Walts A."/>
            <person name="Utterback T."/>
            <person name="Fujii C.Y."/>
            <person name="Shea T.P."/>
            <person name="Creasy T.H."/>
            <person name="Haas B."/>
            <person name="Maiti R."/>
            <person name="Wu D."/>
            <person name="Peterson J."/>
            <person name="Van Aken S."/>
            <person name="Pai G."/>
            <person name="Militscher J."/>
            <person name="Sellers P."/>
            <person name="Gill J.E."/>
            <person name="Feldblyum T.V."/>
            <person name="Preuss D."/>
            <person name="Lin X."/>
            <person name="Nierman W.C."/>
            <person name="Salzberg S.L."/>
            <person name="White O."/>
            <person name="Venter J.C."/>
            <person name="Fraser C.M."/>
            <person name="Kaneko T."/>
            <person name="Nakamura Y."/>
            <person name="Sato S."/>
            <person name="Kato T."/>
            <person name="Asamizu E."/>
            <person name="Sasamoto S."/>
            <person name="Kimura T."/>
            <person name="Idesawa K."/>
            <person name="Kawashima K."/>
            <person name="Kishida Y."/>
            <person name="Kiyokawa C."/>
            <person name="Kohara M."/>
            <person name="Matsumoto M."/>
            <person name="Matsuno A."/>
            <person name="Muraki A."/>
            <person name="Nakayama S."/>
            <person name="Nakazaki N."/>
            <person name="Shinpo S."/>
            <person name="Takeuchi C."/>
            <person name="Wada T."/>
            <person name="Watanabe A."/>
            <person name="Yamada M."/>
            <person name="Yasuda M."/>
            <person name="Tabata S."/>
        </authorList>
    </citation>
    <scope>NUCLEOTIDE SEQUENCE [LARGE SCALE GENOMIC DNA]</scope>
    <source>
        <strain>cv. Columbia</strain>
    </source>
</reference>
<reference key="2">
    <citation type="journal article" date="2017" name="Plant J.">
        <title>Araport11: a complete reannotation of the Arabidopsis thaliana reference genome.</title>
        <authorList>
            <person name="Cheng C.Y."/>
            <person name="Krishnakumar V."/>
            <person name="Chan A.P."/>
            <person name="Thibaud-Nissen F."/>
            <person name="Schobel S."/>
            <person name="Town C.D."/>
        </authorList>
    </citation>
    <scope>GENOME REANNOTATION</scope>
    <source>
        <strain>cv. Columbia</strain>
    </source>
</reference>
<reference key="3">
    <citation type="journal article" date="2004" name="Plant Cell">
        <title>Experimental analysis of the Arabidopsis mitochondrial proteome highlights signaling and regulatory components, provides assessment of targeting prediction programs, and indicates plant-specific mitochondrial proteins.</title>
        <authorList>
            <person name="Heazlewood J.L."/>
            <person name="Tonti-Filippini J.S."/>
            <person name="Gout A.M."/>
            <person name="Day D.A."/>
            <person name="Whelan J."/>
            <person name="Millar A.H."/>
        </authorList>
    </citation>
    <scope>IDENTIFICATION BY MASS SPECTROMETRY</scope>
    <scope>SUBCELLULAR LOCATION [LARGE SCALE ANALYSIS]</scope>
    <source>
        <strain>cv. Landsberg erecta</strain>
    </source>
</reference>
<name>CISY5_ARATH</name>
<keyword id="KW-0496">Mitochondrion</keyword>
<keyword id="KW-1185">Reference proteome</keyword>
<keyword id="KW-0808">Transferase</keyword>
<keyword id="KW-0809">Transit peptide</keyword>
<keyword id="KW-0816">Tricarboxylic acid cycle</keyword>
<sequence length="464" mass="51724">MVFFRSVSAISRLRSRAVQQSSLSNSVRWLHSSELDLKSQMQEIIPEQQDRLKKLKSEQGKVPVGNITVDMVLGGMRGMTGLLWETSLLDADEGIRFRGMSIPECQKILPSAESGEEPLPESLLWLLLTGKVPTKEQANALSTELAHRAAVPAIDALPSTAHPMTQFASGVMALQVQSEFQKAYEQGDISKSKYWEPTFEDALNLIARVPVVASYVYRRMYKDGSIIPLDDSLDYGANFSHMLGFDSPQMKELMRLYVTIHSDHEGGNVSAHAGHLVGSALSDPYLSFAAALNGLAGPLHGLANQEVLLWIKLVVEECGESISKEQLKDYVWKTLNSGKVVPGYGHGVLRKTDPRYICQREFALKHLPDDPLFQLVSKLYEVVPPILTELGKVKNPWPNVDAHSGVLLNYYGLTEARYYTVLFGVSRSLGICSQLIWDRALGLPLERPKSVNMDWLDNFTRLNR</sequence>